<accession>P26533</accession>
<protein>
    <recommendedName>
        <fullName>ATP synthase epsilon chain</fullName>
    </recommendedName>
    <alternativeName>
        <fullName>ATP synthase F1 sector epsilon subunit</fullName>
    </alternativeName>
    <alternativeName>
        <fullName>F-ATPase epsilon subunit</fullName>
    </alternativeName>
</protein>
<feature type="initiator methionine" description="Removed" evidence="3">
    <location>
        <position position="1"/>
    </location>
</feature>
<feature type="chain" id="PRO_0000188230" description="ATP synthase epsilon chain">
    <location>
        <begin position="2"/>
        <end position="136"/>
    </location>
</feature>
<feature type="region of interest" description="Disordered" evidence="2">
    <location>
        <begin position="100"/>
        <end position="120"/>
    </location>
</feature>
<feature type="compositionally biased region" description="Basic and acidic residues" evidence="2">
    <location>
        <begin position="105"/>
        <end position="114"/>
    </location>
</feature>
<comment type="function">
    <text>Produces ATP from ADP in the presence of a proton gradient across the membrane.</text>
</comment>
<comment type="subunit">
    <text>F-type ATPases have 2 components, CF(1) - the catalytic core - and CF(0) - the membrane proton channel. CF(1) has five subunits: alpha(3), beta(3), gamma(1), delta(1), epsilon(1). CF(0) has three main subunits: a, b and c.</text>
</comment>
<comment type="subcellular location">
    <subcellularLocation>
        <location evidence="1">Cellular thylakoid membrane</location>
        <topology evidence="1">Peripheral membrane protein</topology>
    </subcellularLocation>
</comment>
<comment type="similarity">
    <text evidence="4">Belongs to the ATPase epsilon chain family.</text>
</comment>
<comment type="sequence caution" evidence="4">
    <conflict type="erroneous initiation">
        <sequence resource="EMBL-CDS" id="BAA18088"/>
    </conflict>
</comment>
<name>ATPE_SYNY3</name>
<evidence type="ECO:0000250" key="1"/>
<evidence type="ECO:0000256" key="2">
    <source>
        <dbReference type="SAM" id="MobiDB-lite"/>
    </source>
</evidence>
<evidence type="ECO:0000269" key="3">
    <source>
    </source>
</evidence>
<evidence type="ECO:0000305" key="4"/>
<proteinExistence type="evidence at protein level"/>
<organism>
    <name type="scientific">Synechocystis sp. (strain ATCC 27184 / PCC 6803 / Kazusa)</name>
    <dbReference type="NCBI Taxonomy" id="1111708"/>
    <lineage>
        <taxon>Bacteria</taxon>
        <taxon>Bacillati</taxon>
        <taxon>Cyanobacteriota</taxon>
        <taxon>Cyanophyceae</taxon>
        <taxon>Synechococcales</taxon>
        <taxon>Merismopediaceae</taxon>
        <taxon>Synechocystis</taxon>
    </lineage>
</organism>
<reference key="1">
    <citation type="journal article" date="1991" name="Plant Mol. Biol.">
        <title>The atp1 and atp2 operons of the cyanobacterium Synechocystis sp. PCC 6803.</title>
        <authorList>
            <person name="Lill H."/>
            <person name="Nelson N."/>
        </authorList>
    </citation>
    <scope>NUCLEOTIDE SEQUENCE [GENOMIC DNA]</scope>
</reference>
<reference key="2">
    <citation type="journal article" date="1996" name="DNA Res.">
        <title>Sequence analysis of the genome of the unicellular cyanobacterium Synechocystis sp. strain PCC6803. II. Sequence determination of the entire genome and assignment of potential protein-coding regions.</title>
        <authorList>
            <person name="Kaneko T."/>
            <person name="Sato S."/>
            <person name="Kotani H."/>
            <person name="Tanaka A."/>
            <person name="Asamizu E."/>
            <person name="Nakamura Y."/>
            <person name="Miyajima N."/>
            <person name="Hirosawa M."/>
            <person name="Sugiura M."/>
            <person name="Sasamoto S."/>
            <person name="Kimura T."/>
            <person name="Hosouchi T."/>
            <person name="Matsuno A."/>
            <person name="Muraki A."/>
            <person name="Nakazaki N."/>
            <person name="Naruo K."/>
            <person name="Okumura S."/>
            <person name="Shimpo S."/>
            <person name="Takeuchi C."/>
            <person name="Wada T."/>
            <person name="Watanabe A."/>
            <person name="Yamada M."/>
            <person name="Yasuda M."/>
            <person name="Tabata S."/>
        </authorList>
    </citation>
    <scope>NUCLEOTIDE SEQUENCE [LARGE SCALE GENOMIC DNA]</scope>
    <source>
        <strain>ATCC 27184 / PCC 6803 / Kazusa</strain>
    </source>
</reference>
<reference key="3">
    <citation type="journal article" date="1997" name="Electrophoresis">
        <title>Towards a proteome project of cyanobacterium Synechocystis sp. strain PCC6803: linking 130 protein spots with their respective genes.</title>
        <authorList>
            <person name="Sazuka T."/>
            <person name="Ohara O."/>
        </authorList>
    </citation>
    <scope>PROTEIN SEQUENCE OF 2-21</scope>
</reference>
<dbReference type="EMBL" id="X58129">
    <property type="protein sequence ID" value="CAA41138.1"/>
    <property type="molecule type" value="Genomic_DNA"/>
</dbReference>
<dbReference type="EMBL" id="BA000022">
    <property type="protein sequence ID" value="BAA18088.1"/>
    <property type="status" value="ALT_INIT"/>
    <property type="molecule type" value="Genomic_DNA"/>
</dbReference>
<dbReference type="PIR" id="S75527">
    <property type="entry name" value="S75527"/>
</dbReference>
<dbReference type="SMR" id="P26533"/>
<dbReference type="FunCoup" id="P26533">
    <property type="interactions" value="435"/>
</dbReference>
<dbReference type="IntAct" id="P26533">
    <property type="interactions" value="7"/>
</dbReference>
<dbReference type="STRING" id="1148.gene:10498959"/>
<dbReference type="PaxDb" id="1148-1653172"/>
<dbReference type="EnsemblBacteria" id="BAA18088">
    <property type="protein sequence ID" value="BAA18088"/>
    <property type="gene ID" value="BAA18088"/>
</dbReference>
<dbReference type="KEGG" id="syn:slr1330"/>
<dbReference type="eggNOG" id="COG0355">
    <property type="taxonomic scope" value="Bacteria"/>
</dbReference>
<dbReference type="InParanoid" id="P26533"/>
<dbReference type="PhylomeDB" id="P26533"/>
<dbReference type="Proteomes" id="UP000001425">
    <property type="component" value="Chromosome"/>
</dbReference>
<dbReference type="GO" id="GO:0005886">
    <property type="term" value="C:plasma membrane"/>
    <property type="evidence" value="ECO:0000314"/>
    <property type="project" value="UniProtKB"/>
</dbReference>
<dbReference type="GO" id="GO:0031676">
    <property type="term" value="C:plasma membrane-derived thylakoid membrane"/>
    <property type="evidence" value="ECO:0007669"/>
    <property type="project" value="UniProtKB-SubCell"/>
</dbReference>
<dbReference type="GO" id="GO:0045259">
    <property type="term" value="C:proton-transporting ATP synthase complex"/>
    <property type="evidence" value="ECO:0000314"/>
    <property type="project" value="UniProtKB"/>
</dbReference>
<dbReference type="GO" id="GO:0005524">
    <property type="term" value="F:ATP binding"/>
    <property type="evidence" value="ECO:0007669"/>
    <property type="project" value="UniProtKB-UniRule"/>
</dbReference>
<dbReference type="GO" id="GO:0046933">
    <property type="term" value="F:proton-transporting ATP synthase activity, rotational mechanism"/>
    <property type="evidence" value="ECO:0007669"/>
    <property type="project" value="UniProtKB-UniRule"/>
</dbReference>
<dbReference type="GO" id="GO:0015986">
    <property type="term" value="P:proton motive force-driven ATP synthesis"/>
    <property type="evidence" value="ECO:0000318"/>
    <property type="project" value="GO_Central"/>
</dbReference>
<dbReference type="CDD" id="cd12152">
    <property type="entry name" value="F1-ATPase_delta"/>
    <property type="match status" value="1"/>
</dbReference>
<dbReference type="Gene3D" id="2.60.15.10">
    <property type="entry name" value="F0F1 ATP synthase delta/epsilon subunit, N-terminal"/>
    <property type="match status" value="1"/>
</dbReference>
<dbReference type="Gene3D" id="1.10.287.540">
    <property type="entry name" value="Helix hairpin bin"/>
    <property type="match status" value="1"/>
</dbReference>
<dbReference type="HAMAP" id="MF_00530">
    <property type="entry name" value="ATP_synth_epsil_bac"/>
    <property type="match status" value="1"/>
</dbReference>
<dbReference type="InterPro" id="IPR001469">
    <property type="entry name" value="ATP_synth_F1_dsu/esu"/>
</dbReference>
<dbReference type="InterPro" id="IPR020546">
    <property type="entry name" value="ATP_synth_F1_dsu/esu_N"/>
</dbReference>
<dbReference type="InterPro" id="IPR020547">
    <property type="entry name" value="ATP_synth_F1_esu_C"/>
</dbReference>
<dbReference type="InterPro" id="IPR036771">
    <property type="entry name" value="ATPsynth_dsu/esu_N"/>
</dbReference>
<dbReference type="NCBIfam" id="TIGR01216">
    <property type="entry name" value="ATP_synt_epsi"/>
    <property type="match status" value="1"/>
</dbReference>
<dbReference type="PANTHER" id="PTHR13822">
    <property type="entry name" value="ATP SYNTHASE DELTA/EPSILON CHAIN"/>
    <property type="match status" value="1"/>
</dbReference>
<dbReference type="PANTHER" id="PTHR13822:SF10">
    <property type="entry name" value="ATP SYNTHASE EPSILON CHAIN, CHLOROPLASTIC"/>
    <property type="match status" value="1"/>
</dbReference>
<dbReference type="Pfam" id="PF00401">
    <property type="entry name" value="ATP-synt_DE"/>
    <property type="match status" value="1"/>
</dbReference>
<dbReference type="Pfam" id="PF02823">
    <property type="entry name" value="ATP-synt_DE_N"/>
    <property type="match status" value="1"/>
</dbReference>
<dbReference type="SUPFAM" id="SSF51344">
    <property type="entry name" value="Epsilon subunit of F1F0-ATP synthase N-terminal domain"/>
    <property type="match status" value="1"/>
</dbReference>
<keyword id="KW-0066">ATP synthesis</keyword>
<keyword id="KW-0139">CF(1)</keyword>
<keyword id="KW-0903">Direct protein sequencing</keyword>
<keyword id="KW-0375">Hydrogen ion transport</keyword>
<keyword id="KW-0406">Ion transport</keyword>
<keyword id="KW-0472">Membrane</keyword>
<keyword id="KW-1185">Reference proteome</keyword>
<keyword id="KW-0793">Thylakoid</keyword>
<keyword id="KW-0813">Transport</keyword>
<gene>
    <name type="primary">atpC</name>
    <name type="synonym">atpE</name>
    <name type="ordered locus">slr1330</name>
</gene>
<sequence>MTLTVRVITPDKVVWDEEVQELILPSTTGQLGILSNHAPLLTALEIGVMRVRPGKDWQNIAVMGGFAEVENNEVKVLVNGAELGTTIDAESARQAYTAAQGALEEANRGEDKPNQLKASNNYKKARARLQAAGGAV</sequence>